<reference key="1">
    <citation type="journal article" date="2001" name="Nature">
        <title>Genome sequence and gene compaction of the eukaryote parasite Encephalitozoon cuniculi.</title>
        <authorList>
            <person name="Katinka M.D."/>
            <person name="Duprat S."/>
            <person name="Cornillot E."/>
            <person name="Metenier G."/>
            <person name="Thomarat F."/>
            <person name="Prensier G."/>
            <person name="Barbe V."/>
            <person name="Peyretaillade E."/>
            <person name="Brottier P."/>
            <person name="Wincker P."/>
            <person name="Delbac F."/>
            <person name="El Alaoui H."/>
            <person name="Peyret P."/>
            <person name="Saurin W."/>
            <person name="Gouy M."/>
            <person name="Weissenbach J."/>
            <person name="Vivares C.P."/>
        </authorList>
    </citation>
    <scope>NUCLEOTIDE SEQUENCE [LARGE SCALE GENOMIC DNA]</scope>
    <source>
        <strain>GB-M1</strain>
    </source>
</reference>
<keyword id="KW-1185">Reference proteome</keyword>
<proteinExistence type="inferred from homology"/>
<accession>Q8STE8</accession>
<name>Y303_ENCCU</name>
<dbReference type="EMBL" id="AL590443">
    <property type="protein sequence ID" value="CAD26150.1"/>
    <property type="molecule type" value="Genomic_DNA"/>
</dbReference>
<dbReference type="EMBL" id="AL590445">
    <property type="protein sequence ID" value="CAD26521.1"/>
    <property type="molecule type" value="Genomic_DNA"/>
</dbReference>
<dbReference type="EMBL" id="AL590446">
    <property type="protein sequence ID" value="CAD25361.1"/>
    <property type="molecule type" value="Genomic_DNA"/>
</dbReference>
<dbReference type="EMBL" id="AL590446">
    <property type="protein sequence ID" value="CAD25532.1"/>
    <property type="molecule type" value="Genomic_DNA"/>
</dbReference>
<dbReference type="EMBL" id="AL590450">
    <property type="protein sequence ID" value="CAD25911.1"/>
    <property type="molecule type" value="Genomic_DNA"/>
</dbReference>
<dbReference type="RefSeq" id="NP_585757.1">
    <property type="nucleotide sequence ID" value="NM_001041379.1"/>
</dbReference>
<dbReference type="RefSeq" id="NP_585928.1">
    <property type="nucleotide sequence ID" value="NM_001041550.1"/>
</dbReference>
<dbReference type="RefSeq" id="NP_586307.1">
    <property type="nucleotide sequence ID" value="NM_001042140.1"/>
</dbReference>
<dbReference type="RefSeq" id="NP_597344.1">
    <property type="nucleotide sequence ID" value="NM_001041210.1"/>
</dbReference>
<dbReference type="RefSeq" id="NP_597515.1">
    <property type="nucleotide sequence ID" value="NM_001040879.1"/>
</dbReference>
<dbReference type="GeneID" id="858677"/>
<dbReference type="GeneID" id="859008"/>
<dbReference type="GeneID" id="859180"/>
<dbReference type="GeneID" id="859356"/>
<dbReference type="GeneID" id="859958"/>
<dbReference type="KEGG" id="ecu:ECU03_0030"/>
<dbReference type="KEGG" id="ecu:ECU05_0040"/>
<dbReference type="KEGG" id="ecu:ECU06_0010"/>
<dbReference type="KEGG" id="ecu:ECU06_1710"/>
<dbReference type="KEGG" id="ecu:ECU11_0010"/>
<dbReference type="VEuPathDB" id="MicrosporidiaDB:ECU03_0030"/>
<dbReference type="VEuPathDB" id="MicrosporidiaDB:ECU05_0040"/>
<dbReference type="VEuPathDB" id="MicrosporidiaDB:ECU06_0010"/>
<dbReference type="VEuPathDB" id="MicrosporidiaDB:ECU06_1710"/>
<dbReference type="VEuPathDB" id="MicrosporidiaDB:ECU11_0010"/>
<dbReference type="HOGENOM" id="CLU_2073127_0_0_1"/>
<dbReference type="InParanoid" id="Q8STE8"/>
<dbReference type="Proteomes" id="UP000000819">
    <property type="component" value="Chromosome III"/>
</dbReference>
<dbReference type="Proteomes" id="UP000000819">
    <property type="component" value="Chromosome V"/>
</dbReference>
<dbReference type="Proteomes" id="UP000000819">
    <property type="component" value="Chromosome VI"/>
</dbReference>
<dbReference type="Proteomes" id="UP000000819">
    <property type="component" value="Chromosome XI"/>
</dbReference>
<organism>
    <name type="scientific">Encephalitozoon cuniculi (strain GB-M1)</name>
    <name type="common">Microsporidian parasite</name>
    <dbReference type="NCBI Taxonomy" id="284813"/>
    <lineage>
        <taxon>Eukaryota</taxon>
        <taxon>Fungi</taxon>
        <taxon>Fungi incertae sedis</taxon>
        <taxon>Microsporidia</taxon>
        <taxon>Unikaryonidae</taxon>
        <taxon>Encephalitozoon</taxon>
    </lineage>
</organism>
<feature type="chain" id="PRO_0000223153" description="UPF0329 protein ECU03_0030/ECU05_0040/ECU06_0010/ECU06_1710/ECU11_0010">
    <location>
        <begin position="1"/>
        <end position="118"/>
    </location>
</feature>
<comment type="similarity">
    <text evidence="1">Belongs to the UPF0329 family.</text>
</comment>
<gene>
    <name type="ordered locus">ECU03_0030</name>
</gene>
<gene>
    <name type="ordered locus">ECU05_0040</name>
</gene>
<gene>
    <name type="ordered locus">ECU06_0010</name>
</gene>
<gene>
    <name type="ordered locus">ECU06_1710</name>
</gene>
<gene>
    <name type="ordered locus">ECU11_0010</name>
</gene>
<sequence length="118" mass="13302">MCFPVGGLLPYLALRSVAYICVFGDSSRAPDLIREAFESPHFKRFDGAGTYKEAKGRCGMRFADVVNGAFGQISDMADKVGKGEPEVWCIWKKRGEVEMLLKVKEYRKGYGSGKRRRR</sequence>
<protein>
    <recommendedName>
        <fullName>UPF0329 protein ECU03_0030/ECU05_0040/ECU06_0010/ECU06_1710/ECU11_0010</fullName>
    </recommendedName>
</protein>
<evidence type="ECO:0000305" key="1"/>